<sequence>MRQAAPPAARMRMDAKVISKAKLPSRHVTVGPARAPHRSYLYAMGLSAAEIAQPLVGVASCWNEAAPCNISLMRQAQVVKKGVAAANGTPREFCTITVTDGIAMGHQGMKSSLVSREVIADSVELTMRGHCYDALVGLAGCDKSLPGMMMAMVRLNVPSIFIYGGSILPGSYRGRQITVQDVFEAVGQHSVGTIGDAELLEIEQAACPSAGSCGAQFTANTMATVAEAIGLALPYSCGAPAPYEMRDRFNFASGEKIMELIAKNIRPRDIITLKALENAATVVSATGGSTNAALHLPAIAHEAGIKFDLFDVARIFEKTPYIADLKPGGKYVAKDMFEAGGIPLLMKTLLDHGYLHGDCLTVTGRTLAENMEHVAWNEHQDVVRPANRPITQTGGVVGLKGNLAPEGAIVKVAGMTELKFSGPARCFDSEEECFEAVTQRNYREGEVLVIRYEGPRGGPGMREMLSTTAALYGQGMGGKVALITDGRFSGATRGFCIGHVGPEAAVGGPIGLIRDGDVISIDAVNGTIEVALSDSELAARAKTWKARTTDYQSGAIWKYAQTVGSARDGAVTHPGGAKETHCYADI</sequence>
<comment type="function">
    <text evidence="1">Functions in the biosynthesis of branched-chain amino acids. Catalyzes the dehydration of (2R,3R)-2,3-dihydroxy-3-methylpentanoate (2,3-dihydroxy-3-methylvalerate) into 2-oxo-3-methylpentanoate (2-oxo-3-methylvalerate) and of (2R)-2,3-dihydroxy-3-methylbutanoate (2,3-dihydroxyisovalerate) into 2-oxo-3-methylbutanoate (2-oxoisovalerate), the penultimate precursor to L-isoleucine and L-valine, respectively.</text>
</comment>
<comment type="catalytic activity">
    <reaction evidence="1">
        <text>(2R)-2,3-dihydroxy-3-methylbutanoate = 3-methyl-2-oxobutanoate + H2O</text>
        <dbReference type="Rhea" id="RHEA:24809"/>
        <dbReference type="ChEBI" id="CHEBI:11851"/>
        <dbReference type="ChEBI" id="CHEBI:15377"/>
        <dbReference type="ChEBI" id="CHEBI:49072"/>
        <dbReference type="EC" id="4.2.1.9"/>
    </reaction>
    <physiologicalReaction direction="left-to-right" evidence="1">
        <dbReference type="Rhea" id="RHEA:24810"/>
    </physiologicalReaction>
</comment>
<comment type="catalytic activity">
    <reaction evidence="1">
        <text>(2R,3R)-2,3-dihydroxy-3-methylpentanoate = (S)-3-methyl-2-oxopentanoate + H2O</text>
        <dbReference type="Rhea" id="RHEA:27694"/>
        <dbReference type="ChEBI" id="CHEBI:15377"/>
        <dbReference type="ChEBI" id="CHEBI:35146"/>
        <dbReference type="ChEBI" id="CHEBI:49258"/>
        <dbReference type="EC" id="4.2.1.9"/>
    </reaction>
    <physiologicalReaction direction="left-to-right" evidence="1">
        <dbReference type="Rhea" id="RHEA:27695"/>
    </physiologicalReaction>
</comment>
<comment type="cofactor">
    <cofactor evidence="1">
        <name>[2Fe-2S] cluster</name>
        <dbReference type="ChEBI" id="CHEBI:190135"/>
    </cofactor>
    <text evidence="1">Binds 1 [2Fe-2S] cluster per subunit. This cluster acts as a Lewis acid cofactor.</text>
</comment>
<comment type="cofactor">
    <cofactor evidence="1">
        <name>Mg(2+)</name>
        <dbReference type="ChEBI" id="CHEBI:18420"/>
    </cofactor>
</comment>
<comment type="pathway">
    <text evidence="1">Amino-acid biosynthesis; L-isoleucine biosynthesis; L-isoleucine from 2-oxobutanoate: step 3/4.</text>
</comment>
<comment type="pathway">
    <text evidence="1">Amino-acid biosynthesis; L-valine biosynthesis; L-valine from pyruvate: step 3/4.</text>
</comment>
<comment type="subunit">
    <text evidence="1">Homodimer.</text>
</comment>
<comment type="similarity">
    <text evidence="1">Belongs to the IlvD/Edd family.</text>
</comment>
<organism>
    <name type="scientific">Mesorhizobium japonicum (strain LMG 29417 / CECT 9101 / MAFF 303099)</name>
    <name type="common">Mesorhizobium loti (strain MAFF 303099)</name>
    <dbReference type="NCBI Taxonomy" id="266835"/>
    <lineage>
        <taxon>Bacteria</taxon>
        <taxon>Pseudomonadati</taxon>
        <taxon>Pseudomonadota</taxon>
        <taxon>Alphaproteobacteria</taxon>
        <taxon>Hyphomicrobiales</taxon>
        <taxon>Phyllobacteriaceae</taxon>
        <taxon>Mesorhizobium</taxon>
    </lineage>
</organism>
<accession>Q98LB3</accession>
<feature type="chain" id="PRO_0000103497" description="Dihydroxy-acid dehydratase 2">
    <location>
        <begin position="1"/>
        <end position="586"/>
    </location>
</feature>
<feature type="active site" description="Proton acceptor" evidence="1">
    <location>
        <position position="489"/>
    </location>
</feature>
<feature type="binding site" evidence="1">
    <location>
        <position position="68"/>
    </location>
    <ligand>
        <name>[2Fe-2S] cluster</name>
        <dbReference type="ChEBI" id="CHEBI:190135"/>
    </ligand>
</feature>
<feature type="binding site" evidence="1">
    <location>
        <position position="100"/>
    </location>
    <ligand>
        <name>Mg(2+)</name>
        <dbReference type="ChEBI" id="CHEBI:18420"/>
    </ligand>
</feature>
<feature type="binding site" evidence="1">
    <location>
        <position position="141"/>
    </location>
    <ligand>
        <name>[2Fe-2S] cluster</name>
        <dbReference type="ChEBI" id="CHEBI:190135"/>
    </ligand>
</feature>
<feature type="binding site" evidence="1">
    <location>
        <position position="142"/>
    </location>
    <ligand>
        <name>Mg(2+)</name>
        <dbReference type="ChEBI" id="CHEBI:18420"/>
    </ligand>
</feature>
<feature type="binding site" description="via carbamate group" evidence="1">
    <location>
        <position position="143"/>
    </location>
    <ligand>
        <name>Mg(2+)</name>
        <dbReference type="ChEBI" id="CHEBI:18420"/>
    </ligand>
</feature>
<feature type="binding site" evidence="1">
    <location>
        <position position="213"/>
    </location>
    <ligand>
        <name>[2Fe-2S] cluster</name>
        <dbReference type="ChEBI" id="CHEBI:190135"/>
    </ligand>
</feature>
<feature type="binding site" evidence="1">
    <location>
        <position position="463"/>
    </location>
    <ligand>
        <name>Mg(2+)</name>
        <dbReference type="ChEBI" id="CHEBI:18420"/>
    </ligand>
</feature>
<feature type="modified residue" description="N6-carboxylysine" evidence="1">
    <location>
        <position position="143"/>
    </location>
</feature>
<keyword id="KW-0001">2Fe-2S</keyword>
<keyword id="KW-0028">Amino-acid biosynthesis</keyword>
<keyword id="KW-0100">Branched-chain amino acid biosynthesis</keyword>
<keyword id="KW-0408">Iron</keyword>
<keyword id="KW-0411">Iron-sulfur</keyword>
<keyword id="KW-0456">Lyase</keyword>
<keyword id="KW-0460">Magnesium</keyword>
<keyword id="KW-0479">Metal-binding</keyword>
<evidence type="ECO:0000255" key="1">
    <source>
        <dbReference type="HAMAP-Rule" id="MF_00012"/>
    </source>
</evidence>
<gene>
    <name evidence="1" type="primary">ilvD2</name>
    <name type="ordered locus">mll1102</name>
</gene>
<name>ILVD2_RHILO</name>
<proteinExistence type="inferred from homology"/>
<protein>
    <recommendedName>
        <fullName evidence="1">Dihydroxy-acid dehydratase 2</fullName>
        <shortName evidence="1">DAD 2</shortName>
        <ecNumber evidence="1">4.2.1.9</ecNumber>
    </recommendedName>
</protein>
<dbReference type="EC" id="4.2.1.9" evidence="1"/>
<dbReference type="EMBL" id="BA000012">
    <property type="protein sequence ID" value="BAB48550.1"/>
    <property type="molecule type" value="Genomic_DNA"/>
</dbReference>
<dbReference type="SMR" id="Q98LB3"/>
<dbReference type="KEGG" id="mlo:mll1102"/>
<dbReference type="eggNOG" id="COG0129">
    <property type="taxonomic scope" value="Bacteria"/>
</dbReference>
<dbReference type="HOGENOM" id="CLU_014271_4_2_5"/>
<dbReference type="UniPathway" id="UPA00047">
    <property type="reaction ID" value="UER00057"/>
</dbReference>
<dbReference type="UniPathway" id="UPA00049">
    <property type="reaction ID" value="UER00061"/>
</dbReference>
<dbReference type="Proteomes" id="UP000000552">
    <property type="component" value="Chromosome"/>
</dbReference>
<dbReference type="GO" id="GO:0051537">
    <property type="term" value="F:2 iron, 2 sulfur cluster binding"/>
    <property type="evidence" value="ECO:0007669"/>
    <property type="project" value="UniProtKB-UniRule"/>
</dbReference>
<dbReference type="GO" id="GO:0004160">
    <property type="term" value="F:dihydroxy-acid dehydratase activity"/>
    <property type="evidence" value="ECO:0007669"/>
    <property type="project" value="UniProtKB-UniRule"/>
</dbReference>
<dbReference type="GO" id="GO:0000287">
    <property type="term" value="F:magnesium ion binding"/>
    <property type="evidence" value="ECO:0007669"/>
    <property type="project" value="UniProtKB-UniRule"/>
</dbReference>
<dbReference type="GO" id="GO:0009097">
    <property type="term" value="P:isoleucine biosynthetic process"/>
    <property type="evidence" value="ECO:0007669"/>
    <property type="project" value="UniProtKB-UniRule"/>
</dbReference>
<dbReference type="GO" id="GO:0009099">
    <property type="term" value="P:L-valine biosynthetic process"/>
    <property type="evidence" value="ECO:0007669"/>
    <property type="project" value="UniProtKB-UniRule"/>
</dbReference>
<dbReference type="FunFam" id="3.50.30.80:FF:000001">
    <property type="entry name" value="Dihydroxy-acid dehydratase"/>
    <property type="match status" value="1"/>
</dbReference>
<dbReference type="Gene3D" id="3.50.30.80">
    <property type="entry name" value="IlvD/EDD C-terminal domain-like"/>
    <property type="match status" value="1"/>
</dbReference>
<dbReference type="HAMAP" id="MF_00012">
    <property type="entry name" value="IlvD"/>
    <property type="match status" value="1"/>
</dbReference>
<dbReference type="InterPro" id="IPR050165">
    <property type="entry name" value="DHAD_IlvD/Edd"/>
</dbReference>
<dbReference type="InterPro" id="IPR042096">
    <property type="entry name" value="Dihydro-acid_dehy_C"/>
</dbReference>
<dbReference type="InterPro" id="IPR004404">
    <property type="entry name" value="DihydroxyA_deHydtase"/>
</dbReference>
<dbReference type="InterPro" id="IPR020558">
    <property type="entry name" value="DiOHA_6PGluconate_deHydtase_CS"/>
</dbReference>
<dbReference type="InterPro" id="IPR056740">
    <property type="entry name" value="ILV_EDD_C"/>
</dbReference>
<dbReference type="InterPro" id="IPR000581">
    <property type="entry name" value="ILV_EDD_N"/>
</dbReference>
<dbReference type="InterPro" id="IPR037237">
    <property type="entry name" value="IlvD/EDD_N"/>
</dbReference>
<dbReference type="NCBIfam" id="TIGR00110">
    <property type="entry name" value="ilvD"/>
    <property type="match status" value="1"/>
</dbReference>
<dbReference type="NCBIfam" id="NF002068">
    <property type="entry name" value="PRK00911.1"/>
    <property type="match status" value="1"/>
</dbReference>
<dbReference type="PANTHER" id="PTHR21000">
    <property type="entry name" value="DIHYDROXY-ACID DEHYDRATASE DAD"/>
    <property type="match status" value="1"/>
</dbReference>
<dbReference type="PANTHER" id="PTHR21000:SF5">
    <property type="entry name" value="DIHYDROXY-ACID DEHYDRATASE, MITOCHONDRIAL"/>
    <property type="match status" value="1"/>
</dbReference>
<dbReference type="Pfam" id="PF24877">
    <property type="entry name" value="ILV_EDD_C"/>
    <property type="match status" value="1"/>
</dbReference>
<dbReference type="Pfam" id="PF00920">
    <property type="entry name" value="ILVD_EDD_N"/>
    <property type="match status" value="1"/>
</dbReference>
<dbReference type="SUPFAM" id="SSF143975">
    <property type="entry name" value="IlvD/EDD N-terminal domain-like"/>
    <property type="match status" value="1"/>
</dbReference>
<dbReference type="SUPFAM" id="SSF52016">
    <property type="entry name" value="LeuD/IlvD-like"/>
    <property type="match status" value="1"/>
</dbReference>
<dbReference type="PROSITE" id="PS00886">
    <property type="entry name" value="ILVD_EDD_1"/>
    <property type="match status" value="1"/>
</dbReference>
<dbReference type="PROSITE" id="PS00887">
    <property type="entry name" value="ILVD_EDD_2"/>
    <property type="match status" value="1"/>
</dbReference>
<reference key="1">
    <citation type="journal article" date="2000" name="DNA Res.">
        <title>Complete genome structure of the nitrogen-fixing symbiotic bacterium Mesorhizobium loti.</title>
        <authorList>
            <person name="Kaneko T."/>
            <person name="Nakamura Y."/>
            <person name="Sato S."/>
            <person name="Asamizu E."/>
            <person name="Kato T."/>
            <person name="Sasamoto S."/>
            <person name="Watanabe A."/>
            <person name="Idesawa K."/>
            <person name="Ishikawa A."/>
            <person name="Kawashima K."/>
            <person name="Kimura T."/>
            <person name="Kishida Y."/>
            <person name="Kiyokawa C."/>
            <person name="Kohara M."/>
            <person name="Matsumoto M."/>
            <person name="Matsuno A."/>
            <person name="Mochizuki Y."/>
            <person name="Nakayama S."/>
            <person name="Nakazaki N."/>
            <person name="Shimpo S."/>
            <person name="Sugimoto M."/>
            <person name="Takeuchi C."/>
            <person name="Yamada M."/>
            <person name="Tabata S."/>
        </authorList>
    </citation>
    <scope>NUCLEOTIDE SEQUENCE [LARGE SCALE GENOMIC DNA]</scope>
    <source>
        <strain>LMG 29417 / CECT 9101 / MAFF 303099</strain>
    </source>
</reference>